<accession>Q7A5C0</accession>
<keyword id="KW-0687">Ribonucleoprotein</keyword>
<keyword id="KW-0689">Ribosomal protein</keyword>
<keyword id="KW-0694">RNA-binding</keyword>
<keyword id="KW-0699">rRNA-binding</keyword>
<reference key="1">
    <citation type="journal article" date="2001" name="Lancet">
        <title>Whole genome sequencing of meticillin-resistant Staphylococcus aureus.</title>
        <authorList>
            <person name="Kuroda M."/>
            <person name="Ohta T."/>
            <person name="Uchiyama I."/>
            <person name="Baba T."/>
            <person name="Yuzawa H."/>
            <person name="Kobayashi I."/>
            <person name="Cui L."/>
            <person name="Oguchi A."/>
            <person name="Aoki K."/>
            <person name="Nagai Y."/>
            <person name="Lian J.-Q."/>
            <person name="Ito T."/>
            <person name="Kanamori M."/>
            <person name="Matsumaru H."/>
            <person name="Maruyama A."/>
            <person name="Murakami H."/>
            <person name="Hosoyama A."/>
            <person name="Mizutani-Ui Y."/>
            <person name="Takahashi N.K."/>
            <person name="Sawano T."/>
            <person name="Inoue R."/>
            <person name="Kaito C."/>
            <person name="Sekimizu K."/>
            <person name="Hirakawa H."/>
            <person name="Kuhara S."/>
            <person name="Goto S."/>
            <person name="Yabuzaki J."/>
            <person name="Kanehisa M."/>
            <person name="Yamashita A."/>
            <person name="Oshima K."/>
            <person name="Furuya K."/>
            <person name="Yoshino C."/>
            <person name="Shiba T."/>
            <person name="Hattori M."/>
            <person name="Ogasawara N."/>
            <person name="Hayashi H."/>
            <person name="Hiramatsu K."/>
        </authorList>
    </citation>
    <scope>NUCLEOTIDE SEQUENCE [LARGE SCALE GENOMIC DNA]</scope>
    <source>
        <strain>N315</strain>
    </source>
</reference>
<reference key="2">
    <citation type="submission" date="2007-10" db="UniProtKB">
        <title>Shotgun proteomic analysis of total and membrane protein extracts of S. aureus strain N315.</title>
        <authorList>
            <person name="Vaezzadeh A.R."/>
            <person name="Deshusses J."/>
            <person name="Lescuyer P."/>
            <person name="Hochstrasser D.F."/>
        </authorList>
    </citation>
    <scope>IDENTIFICATION BY MASS SPECTROMETRY [LARGE SCALE ANALYSIS]</scope>
    <source>
        <strain>N315</strain>
    </source>
</reference>
<gene>
    <name evidence="1" type="primary">rpsT</name>
    <name type="ordered locus">SA1414</name>
</gene>
<protein>
    <recommendedName>
        <fullName evidence="1">Small ribosomal subunit protein bS20</fullName>
    </recommendedName>
    <alternativeName>
        <fullName evidence="2">30S ribosomal protein S20</fullName>
    </alternativeName>
</protein>
<dbReference type="EMBL" id="BA000018">
    <property type="protein sequence ID" value="BAB42678.1"/>
    <property type="molecule type" value="Genomic_DNA"/>
</dbReference>
<dbReference type="PIR" id="A89940">
    <property type="entry name" value="A89940"/>
</dbReference>
<dbReference type="RefSeq" id="WP_001274017.1">
    <property type="nucleotide sequence ID" value="NC_002745.2"/>
</dbReference>
<dbReference type="SMR" id="Q7A5C0"/>
<dbReference type="EnsemblBacteria" id="BAB42678">
    <property type="protein sequence ID" value="BAB42678"/>
    <property type="gene ID" value="BAB42678"/>
</dbReference>
<dbReference type="GeneID" id="66839775"/>
<dbReference type="KEGG" id="sau:SA1414"/>
<dbReference type="HOGENOM" id="CLU_160655_1_1_9"/>
<dbReference type="GO" id="GO:0005829">
    <property type="term" value="C:cytosol"/>
    <property type="evidence" value="ECO:0007669"/>
    <property type="project" value="TreeGrafter"/>
</dbReference>
<dbReference type="GO" id="GO:0015935">
    <property type="term" value="C:small ribosomal subunit"/>
    <property type="evidence" value="ECO:0007669"/>
    <property type="project" value="TreeGrafter"/>
</dbReference>
<dbReference type="GO" id="GO:0070181">
    <property type="term" value="F:small ribosomal subunit rRNA binding"/>
    <property type="evidence" value="ECO:0007669"/>
    <property type="project" value="TreeGrafter"/>
</dbReference>
<dbReference type="GO" id="GO:0003735">
    <property type="term" value="F:structural constituent of ribosome"/>
    <property type="evidence" value="ECO:0007669"/>
    <property type="project" value="InterPro"/>
</dbReference>
<dbReference type="GO" id="GO:0006412">
    <property type="term" value="P:translation"/>
    <property type="evidence" value="ECO:0007669"/>
    <property type="project" value="UniProtKB-UniRule"/>
</dbReference>
<dbReference type="Gene3D" id="1.20.58.110">
    <property type="entry name" value="Ribosomal protein S20"/>
    <property type="match status" value="1"/>
</dbReference>
<dbReference type="HAMAP" id="MF_00500">
    <property type="entry name" value="Ribosomal_bS20"/>
    <property type="match status" value="1"/>
</dbReference>
<dbReference type="InterPro" id="IPR002583">
    <property type="entry name" value="Ribosomal_bS20"/>
</dbReference>
<dbReference type="InterPro" id="IPR036510">
    <property type="entry name" value="Ribosomal_bS20_sf"/>
</dbReference>
<dbReference type="NCBIfam" id="TIGR00029">
    <property type="entry name" value="S20"/>
    <property type="match status" value="1"/>
</dbReference>
<dbReference type="PANTHER" id="PTHR33398">
    <property type="entry name" value="30S RIBOSOMAL PROTEIN S20"/>
    <property type="match status" value="1"/>
</dbReference>
<dbReference type="PANTHER" id="PTHR33398:SF1">
    <property type="entry name" value="SMALL RIBOSOMAL SUBUNIT PROTEIN BS20C"/>
    <property type="match status" value="1"/>
</dbReference>
<dbReference type="Pfam" id="PF01649">
    <property type="entry name" value="Ribosomal_S20p"/>
    <property type="match status" value="1"/>
</dbReference>
<dbReference type="SUPFAM" id="SSF46992">
    <property type="entry name" value="Ribosomal protein S20"/>
    <property type="match status" value="1"/>
</dbReference>
<name>RS20_STAAN</name>
<proteinExistence type="evidence at protein level"/>
<sequence>MANIKSAIKRVKTTEKAEARNISQKSAMRTAVKNAKTAVSNNADNKNELVSLAVKLVDKAAQSNLIHSNKADRIKSQLMTANK</sequence>
<organism>
    <name type="scientific">Staphylococcus aureus (strain N315)</name>
    <dbReference type="NCBI Taxonomy" id="158879"/>
    <lineage>
        <taxon>Bacteria</taxon>
        <taxon>Bacillati</taxon>
        <taxon>Bacillota</taxon>
        <taxon>Bacilli</taxon>
        <taxon>Bacillales</taxon>
        <taxon>Staphylococcaceae</taxon>
        <taxon>Staphylococcus</taxon>
    </lineage>
</organism>
<evidence type="ECO:0000255" key="1">
    <source>
        <dbReference type="HAMAP-Rule" id="MF_00500"/>
    </source>
</evidence>
<evidence type="ECO:0000305" key="2"/>
<feature type="chain" id="PRO_0000224951" description="Small ribosomal subunit protein bS20">
    <location>
        <begin position="1"/>
        <end position="83"/>
    </location>
</feature>
<comment type="function">
    <text evidence="1">Binds directly to 16S ribosomal RNA.</text>
</comment>
<comment type="similarity">
    <text evidence="1">Belongs to the bacterial ribosomal protein bS20 family.</text>
</comment>